<proteinExistence type="inferred from homology"/>
<comment type="function">
    <text evidence="2">The physiological role of BioH is to remove the methyl group introduced by BioC when the pimeloyl moiety is complete. It allows to synthesize pimeloyl-ACP via the fatty acid synthetic pathway through the hydrolysis of the ester bonds of pimeloyl-ACP esters.</text>
</comment>
<comment type="catalytic activity">
    <reaction evidence="2">
        <text>6-carboxyhexanoyl-[ACP] methyl ester + H2O = 6-carboxyhexanoyl-[ACP] + methanol + H(+)</text>
        <dbReference type="Rhea" id="RHEA:42700"/>
        <dbReference type="Rhea" id="RHEA-COMP:9955"/>
        <dbReference type="Rhea" id="RHEA-COMP:10186"/>
        <dbReference type="ChEBI" id="CHEBI:15377"/>
        <dbReference type="ChEBI" id="CHEBI:15378"/>
        <dbReference type="ChEBI" id="CHEBI:17790"/>
        <dbReference type="ChEBI" id="CHEBI:78846"/>
        <dbReference type="ChEBI" id="CHEBI:82735"/>
        <dbReference type="EC" id="3.1.1.85"/>
    </reaction>
</comment>
<comment type="pathway">
    <text evidence="2">Cofactor biosynthesis; biotin biosynthesis.</text>
</comment>
<comment type="subunit">
    <text evidence="2">Monomer.</text>
</comment>
<comment type="subcellular location">
    <subcellularLocation>
        <location evidence="2">Cytoplasm</location>
    </subcellularLocation>
</comment>
<comment type="similarity">
    <text evidence="2">Belongs to the AB hydrolase superfamily. Carboxylesterase BioH family.</text>
</comment>
<organism>
    <name type="scientific">Photobacterium profundum (strain SS9)</name>
    <dbReference type="NCBI Taxonomy" id="298386"/>
    <lineage>
        <taxon>Bacteria</taxon>
        <taxon>Pseudomonadati</taxon>
        <taxon>Pseudomonadota</taxon>
        <taxon>Gammaproteobacteria</taxon>
        <taxon>Vibrionales</taxon>
        <taxon>Vibrionaceae</taxon>
        <taxon>Photobacterium</taxon>
    </lineage>
</organism>
<protein>
    <recommendedName>
        <fullName evidence="2">Pimeloyl-[acyl-carrier protein] methyl ester esterase</fullName>
        <ecNumber evidence="2">3.1.1.85</ecNumber>
    </recommendedName>
    <alternativeName>
        <fullName evidence="2">Biotin synthesis protein BioH</fullName>
    </alternativeName>
    <alternativeName>
        <fullName evidence="2">Carboxylesterase BioH</fullName>
    </alternativeName>
</protein>
<feature type="chain" id="PRO_0000204487" description="Pimeloyl-[acyl-carrier protein] methyl ester esterase">
    <location>
        <begin position="1"/>
        <end position="254"/>
    </location>
</feature>
<feature type="domain" description="AB hydrolase-1" evidence="1">
    <location>
        <begin position="16"/>
        <end position="242"/>
    </location>
</feature>
<feature type="active site" description="Nucleophile" evidence="2">
    <location>
        <position position="82"/>
    </location>
</feature>
<feature type="active site" evidence="2">
    <location>
        <position position="207"/>
    </location>
</feature>
<feature type="active site" evidence="2">
    <location>
        <position position="235"/>
    </location>
</feature>
<feature type="binding site" evidence="2">
    <location>
        <position position="22"/>
    </location>
    <ligand>
        <name>substrate</name>
    </ligand>
</feature>
<feature type="binding site" evidence="2">
    <location>
        <begin position="82"/>
        <end position="83"/>
    </location>
    <ligand>
        <name>substrate</name>
    </ligand>
</feature>
<feature type="binding site" evidence="2">
    <location>
        <begin position="143"/>
        <end position="147"/>
    </location>
    <ligand>
        <name>substrate</name>
    </ligand>
</feature>
<feature type="binding site" evidence="2">
    <location>
        <position position="235"/>
    </location>
    <ligand>
        <name>substrate</name>
    </ligand>
</feature>
<gene>
    <name evidence="2" type="primary">bioH</name>
    <name type="ordered locus">PBPRA0179</name>
</gene>
<sequence length="254" mass="28142">MTTALCWQTEGQGSDLVLIHGWGMNGAVWQQLLPLLTPFYRVHWVDMPGYGHSHDISADSIEEMAQLLLDKSPISATWLGWSLGGLVATQAALLAPERVTRLVTVASSPRFAAEGTWRGIQPQVLDDFRRQLGDDFQLTVERFLALQAMGSPTARQDIKLLKQAVLSRPQPNPEALSIGLRLLADVDLRAQLGDITQPWLRLYGRLDGLVPAKVAKDMDQLAPQSCRQIFAAASHAPFISHPEEFVQTLKDFIK</sequence>
<dbReference type="EC" id="3.1.1.85" evidence="2"/>
<dbReference type="EMBL" id="CR378663">
    <property type="protein sequence ID" value="CAG18618.1"/>
    <property type="molecule type" value="Genomic_DNA"/>
</dbReference>
<dbReference type="RefSeq" id="WP_011216996.1">
    <property type="nucleotide sequence ID" value="NC_006370.1"/>
</dbReference>
<dbReference type="SMR" id="Q6LVQ7"/>
<dbReference type="STRING" id="298386.PBPRA0179"/>
<dbReference type="ESTHER" id="phopr-q6lvq7">
    <property type="family name" value="BioH"/>
</dbReference>
<dbReference type="KEGG" id="ppr:PBPRA0179"/>
<dbReference type="eggNOG" id="COG0596">
    <property type="taxonomic scope" value="Bacteria"/>
</dbReference>
<dbReference type="HOGENOM" id="CLU_020336_12_2_6"/>
<dbReference type="UniPathway" id="UPA00078"/>
<dbReference type="Proteomes" id="UP000000593">
    <property type="component" value="Chromosome 1"/>
</dbReference>
<dbReference type="GO" id="GO:0005737">
    <property type="term" value="C:cytoplasm"/>
    <property type="evidence" value="ECO:0007669"/>
    <property type="project" value="UniProtKB-SubCell"/>
</dbReference>
<dbReference type="GO" id="GO:0090499">
    <property type="term" value="F:pimelyl-[acyl-carrier protein] methyl ester esterase activity"/>
    <property type="evidence" value="ECO:0007669"/>
    <property type="project" value="UniProtKB-EC"/>
</dbReference>
<dbReference type="GO" id="GO:0009102">
    <property type="term" value="P:biotin biosynthetic process"/>
    <property type="evidence" value="ECO:0007669"/>
    <property type="project" value="UniProtKB-UniRule"/>
</dbReference>
<dbReference type="Gene3D" id="3.40.50.1820">
    <property type="entry name" value="alpha/beta hydrolase"/>
    <property type="match status" value="1"/>
</dbReference>
<dbReference type="HAMAP" id="MF_01260">
    <property type="entry name" value="Carboxylester"/>
    <property type="match status" value="1"/>
</dbReference>
<dbReference type="InterPro" id="IPR000073">
    <property type="entry name" value="AB_hydrolase_1"/>
</dbReference>
<dbReference type="InterPro" id="IPR029058">
    <property type="entry name" value="AB_hydrolase_fold"/>
</dbReference>
<dbReference type="InterPro" id="IPR010076">
    <property type="entry name" value="BioH"/>
</dbReference>
<dbReference type="InterPro" id="IPR050228">
    <property type="entry name" value="Carboxylesterase_BioH"/>
</dbReference>
<dbReference type="NCBIfam" id="TIGR01738">
    <property type="entry name" value="bioH"/>
    <property type="match status" value="1"/>
</dbReference>
<dbReference type="PANTHER" id="PTHR43194">
    <property type="entry name" value="HYDROLASE ALPHA/BETA FOLD FAMILY"/>
    <property type="match status" value="1"/>
</dbReference>
<dbReference type="PANTHER" id="PTHR43194:SF5">
    <property type="entry name" value="PIMELOYL-[ACYL-CARRIER PROTEIN] METHYL ESTER ESTERASE"/>
    <property type="match status" value="1"/>
</dbReference>
<dbReference type="Pfam" id="PF00561">
    <property type="entry name" value="Abhydrolase_1"/>
    <property type="match status" value="1"/>
</dbReference>
<dbReference type="SUPFAM" id="SSF53474">
    <property type="entry name" value="alpha/beta-Hydrolases"/>
    <property type="match status" value="1"/>
</dbReference>
<reference key="1">
    <citation type="journal article" date="2005" name="Science">
        <title>Life at depth: Photobacterium profundum genome sequence and expression analysis.</title>
        <authorList>
            <person name="Vezzi A."/>
            <person name="Campanaro S."/>
            <person name="D'Angelo M."/>
            <person name="Simonato F."/>
            <person name="Vitulo N."/>
            <person name="Lauro F.M."/>
            <person name="Cestaro A."/>
            <person name="Malacrida G."/>
            <person name="Simionati B."/>
            <person name="Cannata N."/>
            <person name="Romualdi C."/>
            <person name="Bartlett D.H."/>
            <person name="Valle G."/>
        </authorList>
    </citation>
    <scope>NUCLEOTIDE SEQUENCE [LARGE SCALE GENOMIC DNA]</scope>
    <source>
        <strain>ATCC BAA-1253 / SS9</strain>
    </source>
</reference>
<keyword id="KW-0093">Biotin biosynthesis</keyword>
<keyword id="KW-0963">Cytoplasm</keyword>
<keyword id="KW-0378">Hydrolase</keyword>
<keyword id="KW-1185">Reference proteome</keyword>
<keyword id="KW-0719">Serine esterase</keyword>
<evidence type="ECO:0000255" key="1"/>
<evidence type="ECO:0000255" key="2">
    <source>
        <dbReference type="HAMAP-Rule" id="MF_01260"/>
    </source>
</evidence>
<accession>Q6LVQ7</accession>
<name>BIOH_PHOPR</name>